<name>CKX7_ORYSJ</name>
<reference key="1">
    <citation type="journal article" date="2005" name="Nature">
        <title>The map-based sequence of the rice genome.</title>
        <authorList>
            <consortium name="International rice genome sequencing project (IRGSP)"/>
        </authorList>
    </citation>
    <scope>NUCLEOTIDE SEQUENCE [LARGE SCALE GENOMIC DNA]</scope>
    <source>
        <strain>cv. Nipponbare</strain>
    </source>
</reference>
<reference key="2">
    <citation type="journal article" date="2013" name="Rice">
        <title>Improvement of the Oryza sativa Nipponbare reference genome using next generation sequence and optical map data.</title>
        <authorList>
            <person name="Kawahara Y."/>
            <person name="de la Bastide M."/>
            <person name="Hamilton J.P."/>
            <person name="Kanamori H."/>
            <person name="McCombie W.R."/>
            <person name="Ouyang S."/>
            <person name="Schwartz D.C."/>
            <person name="Tanaka T."/>
            <person name="Wu J."/>
            <person name="Zhou S."/>
            <person name="Childs K.L."/>
            <person name="Davidson R.M."/>
            <person name="Lin H."/>
            <person name="Quesada-Ocampo L."/>
            <person name="Vaillancourt B."/>
            <person name="Sakai H."/>
            <person name="Lee S.S."/>
            <person name="Kim J."/>
            <person name="Numa H."/>
            <person name="Itoh T."/>
            <person name="Buell C.R."/>
            <person name="Matsumoto T."/>
        </authorList>
    </citation>
    <scope>GENOME REANNOTATION</scope>
    <source>
        <strain>cv. Nipponbare</strain>
    </source>
</reference>
<reference key="3">
    <citation type="journal article" date="2005" name="PLoS Biol.">
        <title>The genomes of Oryza sativa: a history of duplications.</title>
        <authorList>
            <person name="Yu J."/>
            <person name="Wang J."/>
            <person name="Lin W."/>
            <person name="Li S."/>
            <person name="Li H."/>
            <person name="Zhou J."/>
            <person name="Ni P."/>
            <person name="Dong W."/>
            <person name="Hu S."/>
            <person name="Zeng C."/>
            <person name="Zhang J."/>
            <person name="Zhang Y."/>
            <person name="Li R."/>
            <person name="Xu Z."/>
            <person name="Li S."/>
            <person name="Li X."/>
            <person name="Zheng H."/>
            <person name="Cong L."/>
            <person name="Lin L."/>
            <person name="Yin J."/>
            <person name="Geng J."/>
            <person name="Li G."/>
            <person name="Shi J."/>
            <person name="Liu J."/>
            <person name="Lv H."/>
            <person name="Li J."/>
            <person name="Wang J."/>
            <person name="Deng Y."/>
            <person name="Ran L."/>
            <person name="Shi X."/>
            <person name="Wang X."/>
            <person name="Wu Q."/>
            <person name="Li C."/>
            <person name="Ren X."/>
            <person name="Wang J."/>
            <person name="Wang X."/>
            <person name="Li D."/>
            <person name="Liu D."/>
            <person name="Zhang X."/>
            <person name="Ji Z."/>
            <person name="Zhao W."/>
            <person name="Sun Y."/>
            <person name="Zhang Z."/>
            <person name="Bao J."/>
            <person name="Han Y."/>
            <person name="Dong L."/>
            <person name="Ji J."/>
            <person name="Chen P."/>
            <person name="Wu S."/>
            <person name="Liu J."/>
            <person name="Xiao Y."/>
            <person name="Bu D."/>
            <person name="Tan J."/>
            <person name="Yang L."/>
            <person name="Ye C."/>
            <person name="Zhang J."/>
            <person name="Xu J."/>
            <person name="Zhou Y."/>
            <person name="Yu Y."/>
            <person name="Zhang B."/>
            <person name="Zhuang S."/>
            <person name="Wei H."/>
            <person name="Liu B."/>
            <person name="Lei M."/>
            <person name="Yu H."/>
            <person name="Li Y."/>
            <person name="Xu H."/>
            <person name="Wei S."/>
            <person name="He X."/>
            <person name="Fang L."/>
            <person name="Zhang Z."/>
            <person name="Zhang Y."/>
            <person name="Huang X."/>
            <person name="Su Z."/>
            <person name="Tong W."/>
            <person name="Li J."/>
            <person name="Tong Z."/>
            <person name="Li S."/>
            <person name="Ye J."/>
            <person name="Wang L."/>
            <person name="Fang L."/>
            <person name="Lei T."/>
            <person name="Chen C.-S."/>
            <person name="Chen H.-C."/>
            <person name="Xu Z."/>
            <person name="Li H."/>
            <person name="Huang H."/>
            <person name="Zhang F."/>
            <person name="Xu H."/>
            <person name="Li N."/>
            <person name="Zhao C."/>
            <person name="Li S."/>
            <person name="Dong L."/>
            <person name="Huang Y."/>
            <person name="Li L."/>
            <person name="Xi Y."/>
            <person name="Qi Q."/>
            <person name="Li W."/>
            <person name="Zhang B."/>
            <person name="Hu W."/>
            <person name="Zhang Y."/>
            <person name="Tian X."/>
            <person name="Jiao Y."/>
            <person name="Liang X."/>
            <person name="Jin J."/>
            <person name="Gao L."/>
            <person name="Zheng W."/>
            <person name="Hao B."/>
            <person name="Liu S.-M."/>
            <person name="Wang W."/>
            <person name="Yuan L."/>
            <person name="Cao M."/>
            <person name="McDermott J."/>
            <person name="Samudrala R."/>
            <person name="Wang J."/>
            <person name="Wong G.K.-S."/>
            <person name="Yang H."/>
        </authorList>
    </citation>
    <scope>NUCLEOTIDE SEQUENCE [LARGE SCALE GENOMIC DNA]</scope>
    <source>
        <strain>cv. Nipponbare</strain>
    </source>
</reference>
<reference key="4">
    <citation type="journal article" date="2005" name="Science">
        <title>Cytokinin oxidase regulates rice grain production.</title>
        <authorList>
            <person name="Ashikari M."/>
            <person name="Sakakibara H."/>
            <person name="Lin S."/>
            <person name="Yamamoto T."/>
            <person name="Takashi T."/>
            <person name="Nishimura A."/>
            <person name="Angeles E.R."/>
            <person name="Qian Q."/>
            <person name="Kitano H."/>
            <person name="Matsuoka M."/>
        </authorList>
    </citation>
    <scope>GENE FAMILY</scope>
    <scope>NOMENCLATURE</scope>
    <source>
        <strain>cv. Koshihikari</strain>
    </source>
</reference>
<comment type="function">
    <text evidence="2">Catalyzes the oxidation of cytokinins, a family of N(6)-substituted adenine derivatives that are plant hormones, where the substituent is an isopentenyl group.</text>
</comment>
<comment type="catalytic activity">
    <reaction evidence="3">
        <text>N(6)-dimethylallyladenine + A + H2O = 3-methyl-2-butenal + adenine + AH2</text>
        <dbReference type="Rhea" id="RHEA:13625"/>
        <dbReference type="ChEBI" id="CHEBI:13193"/>
        <dbReference type="ChEBI" id="CHEBI:15377"/>
        <dbReference type="ChEBI" id="CHEBI:15825"/>
        <dbReference type="ChEBI" id="CHEBI:16708"/>
        <dbReference type="ChEBI" id="CHEBI:17499"/>
        <dbReference type="ChEBI" id="CHEBI:17660"/>
        <dbReference type="EC" id="1.5.99.12"/>
    </reaction>
</comment>
<comment type="cofactor">
    <cofactor evidence="3">
        <name>FAD</name>
        <dbReference type="ChEBI" id="CHEBI:57692"/>
    </cofactor>
</comment>
<comment type="subunit">
    <text evidence="1">Monomer.</text>
</comment>
<comment type="subcellular location">
    <subcellularLocation>
        <location evidence="1">Secreted</location>
        <location evidence="1">Extracellular space</location>
    </subcellularLocation>
</comment>
<comment type="similarity">
    <text evidence="7">Belongs to the oxygen-dependent FAD-linked oxidoreductase family.</text>
</comment>
<comment type="sequence caution" evidence="7">
    <conflict type="frameshift">
        <sequence resource="EMBL-CDS" id="EAZ22265"/>
    </conflict>
</comment>
<accession>Q6YW50</accession>
<accession>A3A4M6</accession>
<proteinExistence type="inferred from homology"/>
<keyword id="KW-0274">FAD</keyword>
<keyword id="KW-0285">Flavoprotein</keyword>
<keyword id="KW-0325">Glycoprotein</keyword>
<keyword id="KW-0560">Oxidoreductase</keyword>
<keyword id="KW-1185">Reference proteome</keyword>
<keyword id="KW-0964">Secreted</keyword>
<keyword id="KW-0732">Signal</keyword>
<evidence type="ECO:0000250" key="1"/>
<evidence type="ECO:0000250" key="2">
    <source>
        <dbReference type="UniProtKB" id="Q6Z955"/>
    </source>
</evidence>
<evidence type="ECO:0000250" key="3">
    <source>
        <dbReference type="UniProtKB" id="Q8LNV6"/>
    </source>
</evidence>
<evidence type="ECO:0000250" key="4">
    <source>
        <dbReference type="UniProtKB" id="Q9T0N8"/>
    </source>
</evidence>
<evidence type="ECO:0000255" key="5"/>
<evidence type="ECO:0000255" key="6">
    <source>
        <dbReference type="PROSITE-ProRule" id="PRU00718"/>
    </source>
</evidence>
<evidence type="ECO:0000305" key="7"/>
<dbReference type="EC" id="1.5.99.12" evidence="3"/>
<dbReference type="EMBL" id="AP004996">
    <property type="protein sequence ID" value="BAD17197.1"/>
    <property type="molecule type" value="Genomic_DNA"/>
</dbReference>
<dbReference type="EMBL" id="AP005797">
    <property type="protein sequence ID" value="BAD17610.1"/>
    <property type="molecule type" value="Genomic_DNA"/>
</dbReference>
<dbReference type="EMBL" id="AP014958">
    <property type="status" value="NOT_ANNOTATED_CDS"/>
    <property type="molecule type" value="Genomic_DNA"/>
</dbReference>
<dbReference type="EMBL" id="CM000139">
    <property type="protein sequence ID" value="EAZ22265.1"/>
    <property type="status" value="ALT_FRAME"/>
    <property type="molecule type" value="Genomic_DNA"/>
</dbReference>
<dbReference type="SMR" id="Q6YW50"/>
<dbReference type="FunCoup" id="Q6YW50">
    <property type="interactions" value="112"/>
</dbReference>
<dbReference type="STRING" id="39947.Q6YW50"/>
<dbReference type="GlyCosmos" id="Q6YW50">
    <property type="glycosylation" value="4 sites, No reported glycans"/>
</dbReference>
<dbReference type="PaxDb" id="39947-Q6YW50"/>
<dbReference type="GeneID" id="107275724"/>
<dbReference type="KEGG" id="osa:107275724"/>
<dbReference type="eggNOG" id="KOG1231">
    <property type="taxonomic scope" value="Eukaryota"/>
</dbReference>
<dbReference type="InParanoid" id="Q6YW50"/>
<dbReference type="OrthoDB" id="415825at2759"/>
<dbReference type="Proteomes" id="UP000000763">
    <property type="component" value="Chromosome 2"/>
</dbReference>
<dbReference type="Proteomes" id="UP000007752">
    <property type="component" value="Chromosome 2"/>
</dbReference>
<dbReference type="Proteomes" id="UP000059680">
    <property type="component" value="Chromosome 2"/>
</dbReference>
<dbReference type="GO" id="GO:0005576">
    <property type="term" value="C:extracellular region"/>
    <property type="evidence" value="ECO:0007669"/>
    <property type="project" value="UniProtKB-SubCell"/>
</dbReference>
<dbReference type="GO" id="GO:0019139">
    <property type="term" value="F:cytokinin dehydrogenase activity"/>
    <property type="evidence" value="ECO:0007669"/>
    <property type="project" value="UniProtKB-EC"/>
</dbReference>
<dbReference type="GO" id="GO:0071949">
    <property type="term" value="F:FAD binding"/>
    <property type="evidence" value="ECO:0007669"/>
    <property type="project" value="InterPro"/>
</dbReference>
<dbReference type="GO" id="GO:0016491">
    <property type="term" value="F:oxidoreductase activity"/>
    <property type="evidence" value="ECO:0000318"/>
    <property type="project" value="GO_Central"/>
</dbReference>
<dbReference type="GO" id="GO:0009690">
    <property type="term" value="P:cytokinin metabolic process"/>
    <property type="evidence" value="ECO:0007669"/>
    <property type="project" value="InterPro"/>
</dbReference>
<dbReference type="Gene3D" id="3.30.465.10">
    <property type="match status" value="1"/>
</dbReference>
<dbReference type="Gene3D" id="3.40.462.10">
    <property type="entry name" value="FAD-linked oxidases, C-terminal domain"/>
    <property type="match status" value="1"/>
</dbReference>
<dbReference type="Gene3D" id="3.30.43.10">
    <property type="entry name" value="Uridine Diphospho-n-acetylenolpyruvylglucosamine Reductase, domain 2"/>
    <property type="match status" value="1"/>
</dbReference>
<dbReference type="InterPro" id="IPR016170">
    <property type="entry name" value="Cytok_DH_C_sf"/>
</dbReference>
<dbReference type="InterPro" id="IPR015345">
    <property type="entry name" value="Cytokinin_DH_FAD/cytokin-bd"/>
</dbReference>
<dbReference type="InterPro" id="IPR016166">
    <property type="entry name" value="FAD-bd_PCMH"/>
</dbReference>
<dbReference type="InterPro" id="IPR036318">
    <property type="entry name" value="FAD-bd_PCMH-like_sf"/>
</dbReference>
<dbReference type="InterPro" id="IPR016167">
    <property type="entry name" value="FAD-bd_PCMH_sub1"/>
</dbReference>
<dbReference type="InterPro" id="IPR016169">
    <property type="entry name" value="FAD-bd_PCMH_sub2"/>
</dbReference>
<dbReference type="InterPro" id="IPR016164">
    <property type="entry name" value="FAD-linked_Oxase-like_C"/>
</dbReference>
<dbReference type="InterPro" id="IPR050432">
    <property type="entry name" value="FAD-linked_Oxidoreductases_BP"/>
</dbReference>
<dbReference type="InterPro" id="IPR006094">
    <property type="entry name" value="Oxid_FAD_bind_N"/>
</dbReference>
<dbReference type="InterPro" id="IPR006093">
    <property type="entry name" value="Oxy_OxRdtase_FAD_BS"/>
</dbReference>
<dbReference type="PANTHER" id="PTHR13878:SF127">
    <property type="entry name" value="CYTOKININ DEHYDROGENASE 3"/>
    <property type="match status" value="1"/>
</dbReference>
<dbReference type="PANTHER" id="PTHR13878">
    <property type="entry name" value="GULONOLACTONE OXIDASE"/>
    <property type="match status" value="1"/>
</dbReference>
<dbReference type="Pfam" id="PF09265">
    <property type="entry name" value="Cytokin-bind"/>
    <property type="match status" value="1"/>
</dbReference>
<dbReference type="Pfam" id="PF01565">
    <property type="entry name" value="FAD_binding_4"/>
    <property type="match status" value="1"/>
</dbReference>
<dbReference type="SUPFAM" id="SSF56176">
    <property type="entry name" value="FAD-binding/transporter-associated domain-like"/>
    <property type="match status" value="1"/>
</dbReference>
<dbReference type="SUPFAM" id="SSF55103">
    <property type="entry name" value="FAD-linked oxidases, C-terminal domain"/>
    <property type="match status" value="1"/>
</dbReference>
<dbReference type="PROSITE" id="PS51387">
    <property type="entry name" value="FAD_PCMH"/>
    <property type="match status" value="1"/>
</dbReference>
<dbReference type="PROSITE" id="PS00862">
    <property type="entry name" value="OX2_COVAL_FAD"/>
    <property type="match status" value="1"/>
</dbReference>
<feature type="signal peptide" evidence="5">
    <location>
        <begin position="1"/>
        <end position="22"/>
    </location>
</feature>
<feature type="chain" id="PRO_0000394210" description="Cytokinin dehydrogenase 7">
    <location>
        <begin position="23"/>
        <end position="524"/>
    </location>
</feature>
<feature type="domain" description="FAD-binding PCMH-type" evidence="6">
    <location>
        <begin position="55"/>
        <end position="233"/>
    </location>
</feature>
<feature type="binding site" evidence="4">
    <location>
        <position position="91"/>
    </location>
    <ligand>
        <name>FAD</name>
        <dbReference type="ChEBI" id="CHEBI:57692"/>
    </ligand>
</feature>
<feature type="binding site" evidence="4">
    <location>
        <position position="93"/>
    </location>
    <ligand>
        <name>FAD</name>
        <dbReference type="ChEBI" id="CHEBI:57692"/>
    </ligand>
</feature>
<feature type="binding site" evidence="4">
    <location>
        <position position="95"/>
    </location>
    <ligand>
        <name>FAD</name>
        <dbReference type="ChEBI" id="CHEBI:57692"/>
    </ligand>
</feature>
<feature type="binding site" evidence="4">
    <location>
        <position position="99"/>
    </location>
    <ligand>
        <name>FAD</name>
        <dbReference type="ChEBI" id="CHEBI:57692"/>
    </ligand>
</feature>
<feature type="binding site" evidence="4">
    <location>
        <position position="157"/>
    </location>
    <ligand>
        <name>FAD</name>
        <dbReference type="ChEBI" id="CHEBI:57692"/>
    </ligand>
</feature>
<feature type="binding site" evidence="4">
    <location>
        <position position="162"/>
    </location>
    <ligand>
        <name>FAD</name>
        <dbReference type="ChEBI" id="CHEBI:57692"/>
    </ligand>
</feature>
<feature type="binding site" evidence="4">
    <location>
        <position position="168"/>
    </location>
    <ligand>
        <name>FAD</name>
        <dbReference type="ChEBI" id="CHEBI:57692"/>
    </ligand>
</feature>
<feature type="binding site" evidence="4">
    <location>
        <position position="172"/>
    </location>
    <ligand>
        <name>FAD</name>
        <dbReference type="ChEBI" id="CHEBI:57692"/>
    </ligand>
</feature>
<feature type="binding site" evidence="4">
    <location>
        <position position="223"/>
    </location>
    <ligand>
        <name>FAD</name>
        <dbReference type="ChEBI" id="CHEBI:57692"/>
    </ligand>
</feature>
<feature type="binding site" evidence="4">
    <location>
        <position position="472"/>
    </location>
    <ligand>
        <name>FAD</name>
        <dbReference type="ChEBI" id="CHEBI:57692"/>
    </ligand>
</feature>
<feature type="binding site" evidence="4">
    <location>
        <position position="507"/>
    </location>
    <ligand>
        <name>FAD</name>
        <dbReference type="ChEBI" id="CHEBI:57692"/>
    </ligand>
</feature>
<feature type="binding site" evidence="4">
    <location>
        <position position="510"/>
    </location>
    <ligand>
        <name>FAD</name>
        <dbReference type="ChEBI" id="CHEBI:57692"/>
    </ligand>
</feature>
<feature type="modified residue" description="Pros-8alpha-FAD histidine" evidence="4">
    <location>
        <position position="94"/>
    </location>
</feature>
<feature type="glycosylation site" description="N-linked (GlcNAc...) asparagine" evidence="5">
    <location>
        <position position="42"/>
    </location>
</feature>
<feature type="glycosylation site" description="N-linked (GlcNAc...) asparagine" evidence="5">
    <location>
        <position position="121"/>
    </location>
</feature>
<feature type="glycosylation site" description="N-linked (GlcNAc...) asparagine" evidence="5">
    <location>
        <position position="277"/>
    </location>
</feature>
<feature type="glycosylation site" description="N-linked (GlcNAc...) asparagine" evidence="5">
    <location>
        <position position="320"/>
    </location>
</feature>
<feature type="sequence conflict" description="In Ref. 3; EAZ22265." evidence="7" ref="3">
    <original>SA</original>
    <variation>FC</variation>
    <location>
        <begin position="95"/>
        <end position="96"/>
    </location>
</feature>
<organism>
    <name type="scientific">Oryza sativa subsp. japonica</name>
    <name type="common">Rice</name>
    <dbReference type="NCBI Taxonomy" id="39947"/>
    <lineage>
        <taxon>Eukaryota</taxon>
        <taxon>Viridiplantae</taxon>
        <taxon>Streptophyta</taxon>
        <taxon>Embryophyta</taxon>
        <taxon>Tracheophyta</taxon>
        <taxon>Spermatophyta</taxon>
        <taxon>Magnoliopsida</taxon>
        <taxon>Liliopsida</taxon>
        <taxon>Poales</taxon>
        <taxon>Poaceae</taxon>
        <taxon>BOP clade</taxon>
        <taxon>Oryzoideae</taxon>
        <taxon>Oryzeae</taxon>
        <taxon>Oryzinae</taxon>
        <taxon>Oryza</taxon>
        <taxon>Oryza sativa</taxon>
    </lineage>
</organism>
<sequence length="524" mass="56958">MAARCSIAFMIMASCLSVVVSGGLPGDLFALSVASKLRVDRNSTARASSDFGRIVAAAPEAVLHPATPAEIAELVRFSASSPSPFPVAPRGQGHSARGQSLAPGGVVVDMRALASRRGRVNVSAGAAPYVDAGGEQLWADVLRATLEHGLAPRVWTDYLRITVAGTLSNAGIGGQAFRHGPQIANVLELDVITGTGDMVTCSRDKDSDLFFAVLGGLGQFGIITRARIGLMPAPKRVRWVRLAYSDVATFTKDQELLISKRASEAGFDYVEGQVQLNRTLTEGPKSTPFFSSSDIGRLAGLASKSVSGVIYVIEGTMYYNESTSTTMDQKLESILGQLSFEEGFVFTKDVRYVQFLDRVREEERVLRSIGMWDVPHPWLNLFVPRSRILDFDAGVFKGVFAGANPVGVILMYPMNTNMWDDCMMAVASDDDVFYAVGLLRSAAVIGDVERLEKENEAVLAFCHNEDIGCKQYLPYYTSQDGWQRHFGAKWSRVADLKAKYDPHRILSPGQRIFSSPASMVVVSM</sequence>
<gene>
    <name type="primary">CKX7</name>
    <name type="ordered locus">Os02g0220100</name>
    <name type="ordered locus">LOC_Os02g12780</name>
    <name type="ORF">B1131G07.5</name>
    <name type="ORF">OsJ_05920</name>
    <name type="ORF">P0027A02.34</name>
</gene>
<protein>
    <recommendedName>
        <fullName>Cytokinin dehydrogenase 7</fullName>
        <ecNumber evidence="3">1.5.99.12</ecNumber>
    </recommendedName>
    <alternativeName>
        <fullName>Cytokinin oxidase 7</fullName>
        <shortName>OsCKX7</shortName>
    </alternativeName>
</protein>